<comment type="function">
    <text evidence="1">Catalyzes the NADPH-dependent reduction of 7-cyano-7-deazaguanine (preQ0) to 7-aminomethyl-7-deazaguanine (preQ1).</text>
</comment>
<comment type="catalytic activity">
    <reaction evidence="1">
        <text>7-aminomethyl-7-carbaguanine + 2 NADP(+) = 7-cyano-7-deazaguanine + 2 NADPH + 3 H(+)</text>
        <dbReference type="Rhea" id="RHEA:13409"/>
        <dbReference type="ChEBI" id="CHEBI:15378"/>
        <dbReference type="ChEBI" id="CHEBI:45075"/>
        <dbReference type="ChEBI" id="CHEBI:57783"/>
        <dbReference type="ChEBI" id="CHEBI:58349"/>
        <dbReference type="ChEBI" id="CHEBI:58703"/>
        <dbReference type="EC" id="1.7.1.13"/>
    </reaction>
</comment>
<comment type="pathway">
    <text evidence="1">tRNA modification; tRNA-queuosine biosynthesis.</text>
</comment>
<comment type="subcellular location">
    <subcellularLocation>
        <location evidence="1">Cytoplasm</location>
    </subcellularLocation>
</comment>
<comment type="similarity">
    <text evidence="1">Belongs to the GTP cyclohydrolase I family. QueF type 1 subfamily.</text>
</comment>
<name>QUEF_BRASO</name>
<gene>
    <name evidence="1" type="primary">queF</name>
    <name type="ordered locus">BRADO4095</name>
</gene>
<accession>A4YVC1</accession>
<dbReference type="EC" id="1.7.1.13" evidence="1"/>
<dbReference type="EMBL" id="CU234118">
    <property type="protein sequence ID" value="CAL77847.1"/>
    <property type="molecule type" value="Genomic_DNA"/>
</dbReference>
<dbReference type="RefSeq" id="WP_011926977.1">
    <property type="nucleotide sequence ID" value="NC_009445.1"/>
</dbReference>
<dbReference type="SMR" id="A4YVC1"/>
<dbReference type="STRING" id="114615.BRADO4095"/>
<dbReference type="KEGG" id="bra:BRADO4095"/>
<dbReference type="eggNOG" id="COG0780">
    <property type="taxonomic scope" value="Bacteria"/>
</dbReference>
<dbReference type="HOGENOM" id="CLU_102489_0_1_5"/>
<dbReference type="OrthoDB" id="9789995at2"/>
<dbReference type="UniPathway" id="UPA00392"/>
<dbReference type="Proteomes" id="UP000001994">
    <property type="component" value="Chromosome"/>
</dbReference>
<dbReference type="GO" id="GO:0005737">
    <property type="term" value="C:cytoplasm"/>
    <property type="evidence" value="ECO:0007669"/>
    <property type="project" value="UniProtKB-SubCell"/>
</dbReference>
<dbReference type="GO" id="GO:0033739">
    <property type="term" value="F:preQ1 synthase activity"/>
    <property type="evidence" value="ECO:0007669"/>
    <property type="project" value="UniProtKB-UniRule"/>
</dbReference>
<dbReference type="GO" id="GO:0008616">
    <property type="term" value="P:queuosine biosynthetic process"/>
    <property type="evidence" value="ECO:0007669"/>
    <property type="project" value="UniProtKB-UniRule"/>
</dbReference>
<dbReference type="GO" id="GO:0006400">
    <property type="term" value="P:tRNA modification"/>
    <property type="evidence" value="ECO:0007669"/>
    <property type="project" value="UniProtKB-UniRule"/>
</dbReference>
<dbReference type="Gene3D" id="3.30.1130.10">
    <property type="match status" value="1"/>
</dbReference>
<dbReference type="HAMAP" id="MF_00818">
    <property type="entry name" value="QueF_type1"/>
    <property type="match status" value="1"/>
</dbReference>
<dbReference type="InterPro" id="IPR043133">
    <property type="entry name" value="GTP-CH-I_C/QueF"/>
</dbReference>
<dbReference type="InterPro" id="IPR050084">
    <property type="entry name" value="NADPH_dep_7-cyano-7-deazaG_red"/>
</dbReference>
<dbReference type="InterPro" id="IPR029500">
    <property type="entry name" value="QueF"/>
</dbReference>
<dbReference type="InterPro" id="IPR016856">
    <property type="entry name" value="QueF_type1"/>
</dbReference>
<dbReference type="NCBIfam" id="TIGR03139">
    <property type="entry name" value="QueF-II"/>
    <property type="match status" value="1"/>
</dbReference>
<dbReference type="PANTHER" id="PTHR34354">
    <property type="entry name" value="NADPH-DEPENDENT 7-CYANO-7-DEAZAGUANINE REDUCTASE"/>
    <property type="match status" value="1"/>
</dbReference>
<dbReference type="PANTHER" id="PTHR34354:SF1">
    <property type="entry name" value="NADPH-DEPENDENT 7-CYANO-7-DEAZAGUANINE REDUCTASE"/>
    <property type="match status" value="1"/>
</dbReference>
<dbReference type="Pfam" id="PF14489">
    <property type="entry name" value="QueF"/>
    <property type="match status" value="1"/>
</dbReference>
<dbReference type="SUPFAM" id="SSF55620">
    <property type="entry name" value="Tetrahydrobiopterin biosynthesis enzymes-like"/>
    <property type="match status" value="1"/>
</dbReference>
<organism>
    <name type="scientific">Bradyrhizobium sp. (strain ORS 278)</name>
    <dbReference type="NCBI Taxonomy" id="114615"/>
    <lineage>
        <taxon>Bacteria</taxon>
        <taxon>Pseudomonadati</taxon>
        <taxon>Pseudomonadota</taxon>
        <taxon>Alphaproteobacteria</taxon>
        <taxon>Hyphomicrobiales</taxon>
        <taxon>Nitrobacteraceae</taxon>
        <taxon>Bradyrhizobium</taxon>
    </lineage>
</organism>
<keyword id="KW-0963">Cytoplasm</keyword>
<keyword id="KW-0521">NADP</keyword>
<keyword id="KW-0560">Oxidoreductase</keyword>
<keyword id="KW-0671">Queuosine biosynthesis</keyword>
<keyword id="KW-1185">Reference proteome</keyword>
<protein>
    <recommendedName>
        <fullName evidence="1">NADPH-dependent 7-cyano-7-deazaguanine reductase</fullName>
        <ecNumber evidence="1">1.7.1.13</ecNumber>
    </recommendedName>
    <alternativeName>
        <fullName evidence="1">7-cyano-7-carbaguanine reductase</fullName>
    </alternativeName>
    <alternativeName>
        <fullName evidence="1">NADPH-dependent nitrile oxidoreductase</fullName>
    </alternativeName>
    <alternativeName>
        <fullName evidence="1">PreQ(0) reductase</fullName>
    </alternativeName>
</protein>
<feature type="chain" id="PRO_1000062378" description="NADPH-dependent 7-cyano-7-deazaguanine reductase">
    <location>
        <begin position="1"/>
        <end position="158"/>
    </location>
</feature>
<feature type="region of interest" description="Disordered" evidence="2">
    <location>
        <begin position="1"/>
        <end position="37"/>
    </location>
</feature>
<feature type="compositionally biased region" description="Polar residues" evidence="2">
    <location>
        <begin position="1"/>
        <end position="13"/>
    </location>
</feature>
<feature type="compositionally biased region" description="Basic and acidic residues" evidence="2">
    <location>
        <begin position="27"/>
        <end position="37"/>
    </location>
</feature>
<feature type="active site" description="Thioimide intermediate" evidence="1">
    <location>
        <position position="56"/>
    </location>
</feature>
<feature type="active site" description="Proton donor" evidence="1">
    <location>
        <position position="63"/>
    </location>
</feature>
<feature type="binding site" evidence="1">
    <location>
        <begin position="78"/>
        <end position="80"/>
    </location>
    <ligand>
        <name>substrate</name>
    </ligand>
</feature>
<feature type="binding site" evidence="1">
    <location>
        <begin position="97"/>
        <end position="98"/>
    </location>
    <ligand>
        <name>substrate</name>
    </ligand>
</feature>
<evidence type="ECO:0000255" key="1">
    <source>
        <dbReference type="HAMAP-Rule" id="MF_00818"/>
    </source>
</evidence>
<evidence type="ECO:0000256" key="2">
    <source>
        <dbReference type="SAM" id="MobiDB-lite"/>
    </source>
</evidence>
<reference key="1">
    <citation type="journal article" date="2007" name="Science">
        <title>Legumes symbioses: absence of nod genes in photosynthetic bradyrhizobia.</title>
        <authorList>
            <person name="Giraud E."/>
            <person name="Moulin L."/>
            <person name="Vallenet D."/>
            <person name="Barbe V."/>
            <person name="Cytryn E."/>
            <person name="Avarre J.-C."/>
            <person name="Jaubert M."/>
            <person name="Simon D."/>
            <person name="Cartieaux F."/>
            <person name="Prin Y."/>
            <person name="Bena G."/>
            <person name="Hannibal L."/>
            <person name="Fardoux J."/>
            <person name="Kojadinovic M."/>
            <person name="Vuillet L."/>
            <person name="Lajus A."/>
            <person name="Cruveiller S."/>
            <person name="Rouy Z."/>
            <person name="Mangenot S."/>
            <person name="Segurens B."/>
            <person name="Dossat C."/>
            <person name="Franck W.L."/>
            <person name="Chang W.-S."/>
            <person name="Saunders E."/>
            <person name="Bruce D."/>
            <person name="Richardson P."/>
            <person name="Normand P."/>
            <person name="Dreyfus B."/>
            <person name="Pignol D."/>
            <person name="Stacey G."/>
            <person name="Emerich D."/>
            <person name="Vermeglio A."/>
            <person name="Medigue C."/>
            <person name="Sadowsky M."/>
        </authorList>
    </citation>
    <scope>NUCLEOTIDE SEQUENCE [LARGE SCALE GENOMIC DNA]</scope>
    <source>
        <strain>ORS 278</strain>
    </source>
</reference>
<proteinExistence type="inferred from homology"/>
<sequence>MAKRSNTTMTSAGLQLGREVAPPDSPETAKLDRVPNPQRDTDYLARFTVPEFTSLCPVTGQPDFAHLVIDYAPGPWLVESKSLKLYLASFRNHGAFHEDCTVAIGKRLTAEIKPKWLRIGGYWYPRGGIPIDVFWQTGRLPKGLWVPDQGVAPYRGRG</sequence>